<dbReference type="EC" id="3.2.1.51"/>
<dbReference type="EMBL" id="CR857171">
    <property type="protein sequence ID" value="CAH89472.1"/>
    <property type="molecule type" value="mRNA"/>
</dbReference>
<dbReference type="RefSeq" id="NP_001127152.1">
    <property type="nucleotide sequence ID" value="NM_001133680.2"/>
</dbReference>
<dbReference type="SMR" id="Q5RFI5"/>
<dbReference type="FunCoup" id="Q5RFI5">
    <property type="interactions" value="458"/>
</dbReference>
<dbReference type="STRING" id="9601.ENSPPYP00000019105"/>
<dbReference type="CAZy" id="GH29">
    <property type="family name" value="Glycoside Hydrolase Family 29"/>
</dbReference>
<dbReference type="GlyCosmos" id="Q5RFI5">
    <property type="glycosylation" value="3 sites, No reported glycans"/>
</dbReference>
<dbReference type="GeneID" id="100174203"/>
<dbReference type="KEGG" id="pon:100174203"/>
<dbReference type="CTD" id="2519"/>
<dbReference type="eggNOG" id="KOG3340">
    <property type="taxonomic scope" value="Eukaryota"/>
</dbReference>
<dbReference type="InParanoid" id="Q5RFI5"/>
<dbReference type="OrthoDB" id="6039950at2759"/>
<dbReference type="BRENDA" id="3.2.1.51">
    <property type="organism ID" value="9017"/>
</dbReference>
<dbReference type="Proteomes" id="UP000001595">
    <property type="component" value="Unplaced"/>
</dbReference>
<dbReference type="GO" id="GO:0005576">
    <property type="term" value="C:extracellular region"/>
    <property type="evidence" value="ECO:0007669"/>
    <property type="project" value="UniProtKB-SubCell"/>
</dbReference>
<dbReference type="GO" id="GO:0005764">
    <property type="term" value="C:lysosome"/>
    <property type="evidence" value="ECO:0007669"/>
    <property type="project" value="TreeGrafter"/>
</dbReference>
<dbReference type="GO" id="GO:0004560">
    <property type="term" value="F:alpha-L-fucosidase activity"/>
    <property type="evidence" value="ECO:0007669"/>
    <property type="project" value="UniProtKB-EC"/>
</dbReference>
<dbReference type="GO" id="GO:0006004">
    <property type="term" value="P:fucose metabolic process"/>
    <property type="evidence" value="ECO:0007669"/>
    <property type="project" value="InterPro"/>
</dbReference>
<dbReference type="GO" id="GO:0016139">
    <property type="term" value="P:glycoside catabolic process"/>
    <property type="evidence" value="ECO:0007669"/>
    <property type="project" value="TreeGrafter"/>
</dbReference>
<dbReference type="FunFam" id="2.60.40.1180:FF:000013">
    <property type="entry name" value="Alpha-L-fucosidase"/>
    <property type="match status" value="1"/>
</dbReference>
<dbReference type="FunFam" id="3.20.20.80:FF:000027">
    <property type="entry name" value="Alpha-L-fucosidase"/>
    <property type="match status" value="1"/>
</dbReference>
<dbReference type="Gene3D" id="3.20.20.80">
    <property type="entry name" value="Glycosidases"/>
    <property type="match status" value="1"/>
</dbReference>
<dbReference type="Gene3D" id="2.60.40.1180">
    <property type="entry name" value="Golgi alpha-mannosidase II"/>
    <property type="match status" value="1"/>
</dbReference>
<dbReference type="InterPro" id="IPR016286">
    <property type="entry name" value="FUC_metazoa-typ"/>
</dbReference>
<dbReference type="InterPro" id="IPR031919">
    <property type="entry name" value="Fucosidase_C"/>
</dbReference>
<dbReference type="InterPro" id="IPR000933">
    <property type="entry name" value="Glyco_hydro_29"/>
</dbReference>
<dbReference type="InterPro" id="IPR018526">
    <property type="entry name" value="Glyco_hydro_29_CS"/>
</dbReference>
<dbReference type="InterPro" id="IPR013780">
    <property type="entry name" value="Glyco_hydro_b"/>
</dbReference>
<dbReference type="InterPro" id="IPR017853">
    <property type="entry name" value="Glycoside_hydrolase_SF"/>
</dbReference>
<dbReference type="PANTHER" id="PTHR10030">
    <property type="entry name" value="ALPHA-L-FUCOSIDASE"/>
    <property type="match status" value="1"/>
</dbReference>
<dbReference type="PANTHER" id="PTHR10030:SF45">
    <property type="entry name" value="PLASMA ALPHA-L-FUCOSIDASE"/>
    <property type="match status" value="1"/>
</dbReference>
<dbReference type="Pfam" id="PF01120">
    <property type="entry name" value="Alpha_L_fucos"/>
    <property type="match status" value="1"/>
</dbReference>
<dbReference type="Pfam" id="PF16757">
    <property type="entry name" value="Fucosidase_C"/>
    <property type="match status" value="1"/>
</dbReference>
<dbReference type="PIRSF" id="PIRSF001092">
    <property type="entry name" value="Alpha-L-fucosidase"/>
    <property type="match status" value="1"/>
</dbReference>
<dbReference type="PRINTS" id="PR00741">
    <property type="entry name" value="GLHYDRLASE29"/>
</dbReference>
<dbReference type="SMART" id="SM00812">
    <property type="entry name" value="Alpha_L_fucos"/>
    <property type="match status" value="1"/>
</dbReference>
<dbReference type="SUPFAM" id="SSF51445">
    <property type="entry name" value="(Trans)glycosidases"/>
    <property type="match status" value="1"/>
</dbReference>
<dbReference type="PROSITE" id="PS00385">
    <property type="entry name" value="ALPHA_L_FUCOSIDASE"/>
    <property type="match status" value="1"/>
</dbReference>
<proteinExistence type="evidence at transcript level"/>
<reference key="1">
    <citation type="submission" date="2004-11" db="EMBL/GenBank/DDBJ databases">
        <authorList>
            <consortium name="The German cDNA consortium"/>
        </authorList>
    </citation>
    <scope>NUCLEOTIDE SEQUENCE [LARGE SCALE MRNA]</scope>
    <source>
        <tissue>Kidney</tissue>
    </source>
</reference>
<evidence type="ECO:0000250" key="1"/>
<evidence type="ECO:0000250" key="2">
    <source>
        <dbReference type="UniProtKB" id="Q9BTY2"/>
    </source>
</evidence>
<evidence type="ECO:0000255" key="3"/>
<evidence type="ECO:0000255" key="4">
    <source>
        <dbReference type="PROSITE-ProRule" id="PRU10054"/>
    </source>
</evidence>
<evidence type="ECO:0000305" key="5"/>
<keyword id="KW-0325">Glycoprotein</keyword>
<keyword id="KW-0326">Glycosidase</keyword>
<keyword id="KW-0378">Hydrolase</keyword>
<keyword id="KW-0597">Phosphoprotein</keyword>
<keyword id="KW-1185">Reference proteome</keyword>
<keyword id="KW-0964">Secreted</keyword>
<keyword id="KW-0732">Signal</keyword>
<comment type="function">
    <text>Alpha-L-fucosidase is responsible for hydrolyzing the alpha-1,6-linked fucose joined to the reducing-end N-acetylglucosamine of the carbohydrate moieties of glycoproteins.</text>
</comment>
<comment type="catalytic activity">
    <reaction evidence="4">
        <text>an alpha-L-fucoside + H2O = L-fucose + an alcohol</text>
        <dbReference type="Rhea" id="RHEA:12288"/>
        <dbReference type="ChEBI" id="CHEBI:2181"/>
        <dbReference type="ChEBI" id="CHEBI:15377"/>
        <dbReference type="ChEBI" id="CHEBI:28349"/>
        <dbReference type="ChEBI" id="CHEBI:30879"/>
        <dbReference type="EC" id="3.2.1.51"/>
    </reaction>
</comment>
<comment type="subunit">
    <text evidence="1">Homotetramer.</text>
</comment>
<comment type="subcellular location">
    <subcellularLocation>
        <location evidence="5">Secreted</location>
    </subcellularLocation>
</comment>
<comment type="similarity">
    <text evidence="5">Belongs to the glycosyl hydrolase 29 family.</text>
</comment>
<sequence length="465" mass="53963">MRPQELPRLAFPLLLLLLLPPPPCPAHSATRFDPTWESLDARQLPAWFDQAKFGIFIHWGVFSVPSFGSEWFWWYWQKEKIPKYVEFMKDNYPPSFKYEDFGPLFTAKFFNANQWADIFQASGAKYIVLTSKHHKGFTLWGSEYSWNWNAIDEGPKRDIVKELEVAIRNRTDLRFGLYYSLFEWFHPLFLEDESSSFHKRQFPVSKTLPELYELVNNYQPEVLWSDGDGGAPDQYWNSTGFLAWLYNESPVRETVVTNDRWGAGSIYKHGGFYTCSDRYNPGHLLPHKWENCMTIDKLSWGYRREAGISDYLTIEELVKQLVETVSCGGNLLMNIGPTLDGTISVVFEERLRQMGSWLKVNGEAIYETHTWQSQNDTVTPDVWYTSKPKEKLVYAIFLKWPTSGQLFLGQPKAILGATEVKLLGHGQPLNWISLERNGIMVELPQLTIHQMPCKWGWALALTNVI</sequence>
<organism>
    <name type="scientific">Pongo abelii</name>
    <name type="common">Sumatran orangutan</name>
    <name type="synonym">Pongo pygmaeus abelii</name>
    <dbReference type="NCBI Taxonomy" id="9601"/>
    <lineage>
        <taxon>Eukaryota</taxon>
        <taxon>Metazoa</taxon>
        <taxon>Chordata</taxon>
        <taxon>Craniata</taxon>
        <taxon>Vertebrata</taxon>
        <taxon>Euteleostomi</taxon>
        <taxon>Mammalia</taxon>
        <taxon>Eutheria</taxon>
        <taxon>Euarchontoglires</taxon>
        <taxon>Primates</taxon>
        <taxon>Haplorrhini</taxon>
        <taxon>Catarrhini</taxon>
        <taxon>Hominidae</taxon>
        <taxon>Pongo</taxon>
    </lineage>
</organism>
<feature type="signal peptide" evidence="3">
    <location>
        <begin position="1"/>
        <end position="26"/>
    </location>
</feature>
<feature type="chain" id="PRO_0000010314" description="Plasma alpha-L-fucosidase">
    <location>
        <begin position="27"/>
        <end position="465"/>
    </location>
</feature>
<feature type="site" description="May be important for catalysis" evidence="4">
    <location>
        <position position="292"/>
    </location>
</feature>
<feature type="modified residue" description="Phosphoserine" evidence="2">
    <location>
        <position position="299"/>
    </location>
</feature>
<feature type="glycosylation site" description="N-linked (GlcNAc...) asparagine" evidence="3">
    <location>
        <position position="169"/>
    </location>
</feature>
<feature type="glycosylation site" description="N-linked (GlcNAc...) asparagine" evidence="3">
    <location>
        <position position="237"/>
    </location>
</feature>
<feature type="glycosylation site" description="N-linked (GlcNAc...) asparagine" evidence="3">
    <location>
        <position position="375"/>
    </location>
</feature>
<gene>
    <name type="primary">FUCA2</name>
</gene>
<protein>
    <recommendedName>
        <fullName>Plasma alpha-L-fucosidase</fullName>
        <ecNumber>3.2.1.51</ecNumber>
    </recommendedName>
    <alternativeName>
        <fullName>Alpha-L-fucoside fucohydrolase 2</fullName>
        <shortName>Alpha-L-fucosidase 2</shortName>
    </alternativeName>
</protein>
<accession>Q5RFI5</accession>
<name>FUCO2_PONAB</name>